<protein>
    <recommendedName>
        <fullName evidence="1">Fructose-1,6-bisphosphatase class 1</fullName>
        <shortName evidence="1">FBPase class 1</shortName>
        <ecNumber evidence="1">3.1.3.11</ecNumber>
    </recommendedName>
    <alternativeName>
        <fullName evidence="1">D-fructose-1,6-bisphosphate 1-phosphohydrolase class 1</fullName>
    </alternativeName>
</protein>
<comment type="catalytic activity">
    <reaction evidence="1">
        <text>beta-D-fructose 1,6-bisphosphate + H2O = beta-D-fructose 6-phosphate + phosphate</text>
        <dbReference type="Rhea" id="RHEA:11064"/>
        <dbReference type="ChEBI" id="CHEBI:15377"/>
        <dbReference type="ChEBI" id="CHEBI:32966"/>
        <dbReference type="ChEBI" id="CHEBI:43474"/>
        <dbReference type="ChEBI" id="CHEBI:57634"/>
        <dbReference type="EC" id="3.1.3.11"/>
    </reaction>
</comment>
<comment type="cofactor">
    <cofactor evidence="1">
        <name>Mg(2+)</name>
        <dbReference type="ChEBI" id="CHEBI:18420"/>
    </cofactor>
    <text evidence="1">Binds 2 magnesium ions per subunit.</text>
</comment>
<comment type="pathway">
    <text evidence="1">Carbohydrate biosynthesis; gluconeogenesis.</text>
</comment>
<comment type="subunit">
    <text evidence="1">Homotetramer.</text>
</comment>
<comment type="subcellular location">
    <subcellularLocation>
        <location evidence="1">Cytoplasm</location>
    </subcellularLocation>
</comment>
<comment type="similarity">
    <text evidence="1">Belongs to the FBPase class 1 family.</text>
</comment>
<dbReference type="EC" id="3.1.3.11" evidence="1"/>
<dbReference type="EMBL" id="CP000507">
    <property type="protein sequence ID" value="ABL98807.1"/>
    <property type="molecule type" value="Genomic_DNA"/>
</dbReference>
<dbReference type="RefSeq" id="WP_011758717.1">
    <property type="nucleotide sequence ID" value="NC_008700.1"/>
</dbReference>
<dbReference type="SMR" id="A1S351"/>
<dbReference type="STRING" id="326297.Sama_0599"/>
<dbReference type="KEGG" id="saz:Sama_0599"/>
<dbReference type="eggNOG" id="COG0158">
    <property type="taxonomic scope" value="Bacteria"/>
</dbReference>
<dbReference type="HOGENOM" id="CLU_039977_0_0_6"/>
<dbReference type="OrthoDB" id="9806756at2"/>
<dbReference type="UniPathway" id="UPA00138"/>
<dbReference type="Proteomes" id="UP000009175">
    <property type="component" value="Chromosome"/>
</dbReference>
<dbReference type="GO" id="GO:0005829">
    <property type="term" value="C:cytosol"/>
    <property type="evidence" value="ECO:0007669"/>
    <property type="project" value="TreeGrafter"/>
</dbReference>
<dbReference type="GO" id="GO:0042132">
    <property type="term" value="F:fructose 1,6-bisphosphate 1-phosphatase activity"/>
    <property type="evidence" value="ECO:0007669"/>
    <property type="project" value="UniProtKB-UniRule"/>
</dbReference>
<dbReference type="GO" id="GO:0000287">
    <property type="term" value="F:magnesium ion binding"/>
    <property type="evidence" value="ECO:0007669"/>
    <property type="project" value="UniProtKB-UniRule"/>
</dbReference>
<dbReference type="GO" id="GO:0030388">
    <property type="term" value="P:fructose 1,6-bisphosphate metabolic process"/>
    <property type="evidence" value="ECO:0007669"/>
    <property type="project" value="TreeGrafter"/>
</dbReference>
<dbReference type="GO" id="GO:0006002">
    <property type="term" value="P:fructose 6-phosphate metabolic process"/>
    <property type="evidence" value="ECO:0007669"/>
    <property type="project" value="TreeGrafter"/>
</dbReference>
<dbReference type="GO" id="GO:0006000">
    <property type="term" value="P:fructose metabolic process"/>
    <property type="evidence" value="ECO:0007669"/>
    <property type="project" value="TreeGrafter"/>
</dbReference>
<dbReference type="GO" id="GO:0006094">
    <property type="term" value="P:gluconeogenesis"/>
    <property type="evidence" value="ECO:0007669"/>
    <property type="project" value="UniProtKB-UniRule"/>
</dbReference>
<dbReference type="GO" id="GO:0005986">
    <property type="term" value="P:sucrose biosynthetic process"/>
    <property type="evidence" value="ECO:0007669"/>
    <property type="project" value="TreeGrafter"/>
</dbReference>
<dbReference type="CDD" id="cd00354">
    <property type="entry name" value="FBPase"/>
    <property type="match status" value="1"/>
</dbReference>
<dbReference type="FunFam" id="3.30.540.10:FF:000002">
    <property type="entry name" value="Fructose-1,6-bisphosphatase class 1"/>
    <property type="match status" value="1"/>
</dbReference>
<dbReference type="FunFam" id="3.40.190.80:FF:000011">
    <property type="entry name" value="Fructose-1,6-bisphosphatase class 1"/>
    <property type="match status" value="1"/>
</dbReference>
<dbReference type="Gene3D" id="3.40.190.80">
    <property type="match status" value="1"/>
</dbReference>
<dbReference type="Gene3D" id="3.30.540.10">
    <property type="entry name" value="Fructose-1,6-Bisphosphatase, subunit A, domain 1"/>
    <property type="match status" value="1"/>
</dbReference>
<dbReference type="HAMAP" id="MF_01855">
    <property type="entry name" value="FBPase_class1"/>
    <property type="match status" value="1"/>
</dbReference>
<dbReference type="InterPro" id="IPR044015">
    <property type="entry name" value="FBPase_C_dom"/>
</dbReference>
<dbReference type="InterPro" id="IPR000146">
    <property type="entry name" value="FBPase_class-1"/>
</dbReference>
<dbReference type="InterPro" id="IPR033391">
    <property type="entry name" value="FBPase_N"/>
</dbReference>
<dbReference type="InterPro" id="IPR028343">
    <property type="entry name" value="FBPtase"/>
</dbReference>
<dbReference type="NCBIfam" id="NF006779">
    <property type="entry name" value="PRK09293.1-3"/>
    <property type="match status" value="1"/>
</dbReference>
<dbReference type="NCBIfam" id="NF006780">
    <property type="entry name" value="PRK09293.1-4"/>
    <property type="match status" value="1"/>
</dbReference>
<dbReference type="PANTHER" id="PTHR11556">
    <property type="entry name" value="FRUCTOSE-1,6-BISPHOSPHATASE-RELATED"/>
    <property type="match status" value="1"/>
</dbReference>
<dbReference type="PANTHER" id="PTHR11556:SF35">
    <property type="entry name" value="SEDOHEPTULOSE-1,7-BISPHOSPHATASE, CHLOROPLASTIC"/>
    <property type="match status" value="1"/>
</dbReference>
<dbReference type="Pfam" id="PF00316">
    <property type="entry name" value="FBPase"/>
    <property type="match status" value="1"/>
</dbReference>
<dbReference type="Pfam" id="PF18913">
    <property type="entry name" value="FBPase_C"/>
    <property type="match status" value="1"/>
</dbReference>
<dbReference type="PIRSF" id="PIRSF500210">
    <property type="entry name" value="FBPtase"/>
    <property type="match status" value="1"/>
</dbReference>
<dbReference type="PIRSF" id="PIRSF000904">
    <property type="entry name" value="FBPtase_SBPase"/>
    <property type="match status" value="1"/>
</dbReference>
<dbReference type="PRINTS" id="PR00115">
    <property type="entry name" value="F16BPHPHTASE"/>
</dbReference>
<dbReference type="SUPFAM" id="SSF56655">
    <property type="entry name" value="Carbohydrate phosphatase"/>
    <property type="match status" value="1"/>
</dbReference>
<keyword id="KW-0119">Carbohydrate metabolism</keyword>
<keyword id="KW-0963">Cytoplasm</keyword>
<keyword id="KW-0378">Hydrolase</keyword>
<keyword id="KW-0460">Magnesium</keyword>
<keyword id="KW-0479">Metal-binding</keyword>
<keyword id="KW-1185">Reference proteome</keyword>
<sequence length="320" mass="34306">MQTLSQSLKQSAISEELASLLTVLANSSKDISQAVRRGALAGVLGVAGTENVQGEDQKKLDVITNDMLKDALAAQGSVKALASEEEDEIVPLAQDGQFLVCFDPLDGSSNIDINSLVGTIFSVLPAPSGDVSEQSFLQPGRKQLAAGYVLYGPSTMLALTTGQGVQLFTLDPVSGDYLLTVDGVQISKDTGEFAINMSNQRFWEPGMQAYIADLIQGKEGPRGKNFNMRWIAAMVGDVHRVLCRGGLFTYPTDTKDPKKPFKLRLMYEANPMAFLVEQAGGKASTGYETILDIAPSEIHQRVAVILGSANEVDACLGYHN</sequence>
<reference key="1">
    <citation type="submission" date="2006-12" db="EMBL/GenBank/DDBJ databases">
        <title>Complete sequence of Shewanella amazonensis SB2B.</title>
        <authorList>
            <consortium name="US DOE Joint Genome Institute"/>
            <person name="Copeland A."/>
            <person name="Lucas S."/>
            <person name="Lapidus A."/>
            <person name="Barry K."/>
            <person name="Detter J.C."/>
            <person name="Glavina del Rio T."/>
            <person name="Hammon N."/>
            <person name="Israni S."/>
            <person name="Dalin E."/>
            <person name="Tice H."/>
            <person name="Pitluck S."/>
            <person name="Munk A.C."/>
            <person name="Brettin T."/>
            <person name="Bruce D."/>
            <person name="Han C."/>
            <person name="Tapia R."/>
            <person name="Gilna P."/>
            <person name="Schmutz J."/>
            <person name="Larimer F."/>
            <person name="Land M."/>
            <person name="Hauser L."/>
            <person name="Kyrpides N."/>
            <person name="Mikhailova N."/>
            <person name="Fredrickson J."/>
            <person name="Richardson P."/>
        </authorList>
    </citation>
    <scope>NUCLEOTIDE SEQUENCE [LARGE SCALE GENOMIC DNA]</scope>
    <source>
        <strain>ATCC BAA-1098 / SB2B</strain>
    </source>
</reference>
<accession>A1S351</accession>
<name>F16PA_SHEAM</name>
<proteinExistence type="inferred from homology"/>
<organism>
    <name type="scientific">Shewanella amazonensis (strain ATCC BAA-1098 / SB2B)</name>
    <dbReference type="NCBI Taxonomy" id="326297"/>
    <lineage>
        <taxon>Bacteria</taxon>
        <taxon>Pseudomonadati</taxon>
        <taxon>Pseudomonadota</taxon>
        <taxon>Gammaproteobacteria</taxon>
        <taxon>Alteromonadales</taxon>
        <taxon>Shewanellaceae</taxon>
        <taxon>Shewanella</taxon>
    </lineage>
</organism>
<feature type="chain" id="PRO_0000364699" description="Fructose-1,6-bisphosphatase class 1">
    <location>
        <begin position="1"/>
        <end position="320"/>
    </location>
</feature>
<feature type="binding site" evidence="1">
    <location>
        <position position="84"/>
    </location>
    <ligand>
        <name>Mg(2+)</name>
        <dbReference type="ChEBI" id="CHEBI:18420"/>
        <label>1</label>
    </ligand>
</feature>
<feature type="binding site" evidence="1">
    <location>
        <position position="103"/>
    </location>
    <ligand>
        <name>Mg(2+)</name>
        <dbReference type="ChEBI" id="CHEBI:18420"/>
        <label>1</label>
    </ligand>
</feature>
<feature type="binding site" evidence="1">
    <location>
        <position position="103"/>
    </location>
    <ligand>
        <name>Mg(2+)</name>
        <dbReference type="ChEBI" id="CHEBI:18420"/>
        <label>2</label>
    </ligand>
</feature>
<feature type="binding site" evidence="1">
    <location>
        <position position="105"/>
    </location>
    <ligand>
        <name>Mg(2+)</name>
        <dbReference type="ChEBI" id="CHEBI:18420"/>
        <label>1</label>
    </ligand>
</feature>
<feature type="binding site" evidence="1">
    <location>
        <begin position="106"/>
        <end position="109"/>
    </location>
    <ligand>
        <name>substrate</name>
    </ligand>
</feature>
<feature type="binding site" evidence="1">
    <location>
        <position position="106"/>
    </location>
    <ligand>
        <name>Mg(2+)</name>
        <dbReference type="ChEBI" id="CHEBI:18420"/>
        <label>2</label>
    </ligand>
</feature>
<feature type="binding site" evidence="1">
    <location>
        <position position="196"/>
    </location>
    <ligand>
        <name>substrate</name>
    </ligand>
</feature>
<feature type="binding site" evidence="1">
    <location>
        <position position="262"/>
    </location>
    <ligand>
        <name>substrate</name>
    </ligand>
</feature>
<feature type="binding site" evidence="1">
    <location>
        <position position="268"/>
    </location>
    <ligand>
        <name>Mg(2+)</name>
        <dbReference type="ChEBI" id="CHEBI:18420"/>
        <label>2</label>
    </ligand>
</feature>
<evidence type="ECO:0000255" key="1">
    <source>
        <dbReference type="HAMAP-Rule" id="MF_01855"/>
    </source>
</evidence>
<gene>
    <name evidence="1" type="primary">fbp</name>
    <name type="ordered locus">Sama_0599</name>
</gene>